<feature type="chain" id="PRO_0000048152" description="Tubulin alpha-8 chain">
    <location>
        <begin position="1" status="less than"/>
        <end position="324"/>
    </location>
</feature>
<feature type="active site" evidence="1">
    <location>
        <position position="129"/>
    </location>
</feature>
<feature type="binding site" evidence="1">
    <location>
        <position position="15"/>
    </location>
    <ligand>
        <name>GTP</name>
        <dbReference type="ChEBI" id="CHEBI:37565"/>
    </ligand>
</feature>
<feature type="binding site" evidence="1">
    <location>
        <position position="19"/>
    </location>
    <ligand>
        <name>GTP</name>
        <dbReference type="ChEBI" id="CHEBI:37565"/>
    </ligand>
</feature>
<feature type="binding site" evidence="1">
    <location>
        <position position="20"/>
    </location>
    <ligand>
        <name>GTP</name>
        <dbReference type="ChEBI" id="CHEBI:37565"/>
    </ligand>
</feature>
<feature type="binding site" evidence="1">
    <location>
        <position position="54"/>
    </location>
    <ligand>
        <name>GTP</name>
        <dbReference type="ChEBI" id="CHEBI:37565"/>
    </ligand>
</feature>
<feature type="binding site" evidence="1">
    <location>
        <position position="81"/>
    </location>
    <ligand>
        <name>GTP</name>
        <dbReference type="ChEBI" id="CHEBI:37565"/>
    </ligand>
</feature>
<feature type="binding site" evidence="1">
    <location>
        <position position="103"/>
    </location>
    <ligand>
        <name>GTP</name>
        <dbReference type="ChEBI" id="CHEBI:37565"/>
    </ligand>
</feature>
<feature type="site" description="Involved in polymerization">
    <location>
        <position position="324"/>
    </location>
</feature>
<feature type="non-terminal residue">
    <location>
        <position position="1"/>
    </location>
</feature>
<organism>
    <name type="scientific">Gallus gallus</name>
    <name type="common">Chicken</name>
    <dbReference type="NCBI Taxonomy" id="9031"/>
    <lineage>
        <taxon>Eukaryota</taxon>
        <taxon>Metazoa</taxon>
        <taxon>Chordata</taxon>
        <taxon>Craniata</taxon>
        <taxon>Vertebrata</taxon>
        <taxon>Euteleostomi</taxon>
        <taxon>Archelosauria</taxon>
        <taxon>Archosauria</taxon>
        <taxon>Dinosauria</taxon>
        <taxon>Saurischia</taxon>
        <taxon>Theropoda</taxon>
        <taxon>Coelurosauria</taxon>
        <taxon>Aves</taxon>
        <taxon>Neognathae</taxon>
        <taxon>Galloanserae</taxon>
        <taxon>Galliformes</taxon>
        <taxon>Phasianidae</taxon>
        <taxon>Phasianinae</taxon>
        <taxon>Gallus</taxon>
    </lineage>
</organism>
<keyword id="KW-0963">Cytoplasm</keyword>
<keyword id="KW-0206">Cytoskeleton</keyword>
<keyword id="KW-0342">GTP-binding</keyword>
<keyword id="KW-0378">Hydrolase</keyword>
<keyword id="KW-0493">Microtubule</keyword>
<keyword id="KW-0547">Nucleotide-binding</keyword>
<keyword id="KW-1185">Reference proteome</keyword>
<accession>P09645</accession>
<evidence type="ECO:0000250" key="1">
    <source>
        <dbReference type="UniProtKB" id="P68363"/>
    </source>
</evidence>
<evidence type="ECO:0000250" key="2">
    <source>
        <dbReference type="UniProtKB" id="P68369"/>
    </source>
</evidence>
<evidence type="ECO:0000250" key="3">
    <source>
        <dbReference type="UniProtKB" id="Q71U36"/>
    </source>
</evidence>
<evidence type="ECO:0000305" key="4"/>
<name>TBA8_CHICK</name>
<proteinExistence type="inferred from homology"/>
<reference key="1">
    <citation type="journal article" date="1988" name="EMBO J.">
        <title>A survey of the alpha-tubulin gene family in chicken: unexpected sequence heterogeneity in the polypeptides encoded by five expressed genes.</title>
        <authorList>
            <person name="Pratt L.F."/>
            <person name="Cleveland D.W."/>
        </authorList>
    </citation>
    <scope>NUCLEOTIDE SEQUENCE [GENOMIC DNA]</scope>
</reference>
<dbReference type="EC" id="3.6.5.-" evidence="1"/>
<dbReference type="EMBL" id="X08064">
    <property type="protein sequence ID" value="CAA30853.1"/>
    <property type="molecule type" value="Genomic_DNA"/>
</dbReference>
<dbReference type="PIR" id="S00472">
    <property type="entry name" value="UBCHA8"/>
</dbReference>
<dbReference type="SMR" id="P09645"/>
<dbReference type="FunCoup" id="P09645">
    <property type="interactions" value="28"/>
</dbReference>
<dbReference type="VEuPathDB" id="HostDB:geneid_421169"/>
<dbReference type="InParanoid" id="P09645"/>
<dbReference type="PhylomeDB" id="P09645"/>
<dbReference type="Proteomes" id="UP000000539">
    <property type="component" value="Unassembled WGS sequence"/>
</dbReference>
<dbReference type="GO" id="GO:0005737">
    <property type="term" value="C:cytoplasm"/>
    <property type="evidence" value="ECO:0000318"/>
    <property type="project" value="GO_Central"/>
</dbReference>
<dbReference type="GO" id="GO:0005874">
    <property type="term" value="C:microtubule"/>
    <property type="evidence" value="ECO:0000318"/>
    <property type="project" value="GO_Central"/>
</dbReference>
<dbReference type="GO" id="GO:0005525">
    <property type="term" value="F:GTP binding"/>
    <property type="evidence" value="ECO:0000318"/>
    <property type="project" value="GO_Central"/>
</dbReference>
<dbReference type="GO" id="GO:0016787">
    <property type="term" value="F:hydrolase activity"/>
    <property type="evidence" value="ECO:0007669"/>
    <property type="project" value="UniProtKB-KW"/>
</dbReference>
<dbReference type="GO" id="GO:0005200">
    <property type="term" value="F:structural constituent of cytoskeleton"/>
    <property type="evidence" value="ECO:0000318"/>
    <property type="project" value="GO_Central"/>
</dbReference>
<dbReference type="GO" id="GO:0000226">
    <property type="term" value="P:microtubule cytoskeleton organization"/>
    <property type="evidence" value="ECO:0000318"/>
    <property type="project" value="GO_Central"/>
</dbReference>
<dbReference type="GO" id="GO:0000278">
    <property type="term" value="P:mitotic cell cycle"/>
    <property type="evidence" value="ECO:0000318"/>
    <property type="project" value="GO_Central"/>
</dbReference>
<dbReference type="CDD" id="cd02186">
    <property type="entry name" value="alpha_tubulin"/>
    <property type="match status" value="1"/>
</dbReference>
<dbReference type="FunFam" id="1.10.287.600:FF:000005">
    <property type="entry name" value="Tubulin alpha chain"/>
    <property type="match status" value="1"/>
</dbReference>
<dbReference type="FunFam" id="3.30.1330.20:FF:000001">
    <property type="entry name" value="Tubulin alpha chain"/>
    <property type="match status" value="1"/>
</dbReference>
<dbReference type="FunFam" id="3.40.50.1440:FF:000016">
    <property type="entry name" value="Tubulin alpha chain"/>
    <property type="match status" value="1"/>
</dbReference>
<dbReference type="Gene3D" id="1.10.287.600">
    <property type="entry name" value="Helix hairpin bin"/>
    <property type="match status" value="1"/>
</dbReference>
<dbReference type="Gene3D" id="3.30.1330.20">
    <property type="entry name" value="Tubulin/FtsZ, C-terminal domain"/>
    <property type="match status" value="1"/>
</dbReference>
<dbReference type="Gene3D" id="3.40.50.1440">
    <property type="entry name" value="Tubulin/FtsZ, GTPase domain"/>
    <property type="match status" value="1"/>
</dbReference>
<dbReference type="InterPro" id="IPR002452">
    <property type="entry name" value="Alpha_tubulin"/>
</dbReference>
<dbReference type="InterPro" id="IPR008280">
    <property type="entry name" value="Tub_FtsZ_C"/>
</dbReference>
<dbReference type="InterPro" id="IPR000217">
    <property type="entry name" value="Tubulin"/>
</dbReference>
<dbReference type="InterPro" id="IPR037103">
    <property type="entry name" value="Tubulin/FtsZ-like_C"/>
</dbReference>
<dbReference type="InterPro" id="IPR018316">
    <property type="entry name" value="Tubulin/FtsZ_2-layer-sand-dom"/>
</dbReference>
<dbReference type="InterPro" id="IPR036525">
    <property type="entry name" value="Tubulin/FtsZ_GTPase_sf"/>
</dbReference>
<dbReference type="InterPro" id="IPR023123">
    <property type="entry name" value="Tubulin_C"/>
</dbReference>
<dbReference type="InterPro" id="IPR017975">
    <property type="entry name" value="Tubulin_CS"/>
</dbReference>
<dbReference type="InterPro" id="IPR003008">
    <property type="entry name" value="Tubulin_FtsZ_GTPase"/>
</dbReference>
<dbReference type="PANTHER" id="PTHR11588">
    <property type="entry name" value="TUBULIN"/>
    <property type="match status" value="1"/>
</dbReference>
<dbReference type="Pfam" id="PF00091">
    <property type="entry name" value="Tubulin"/>
    <property type="match status" value="1"/>
</dbReference>
<dbReference type="Pfam" id="PF03953">
    <property type="entry name" value="Tubulin_C"/>
    <property type="match status" value="1"/>
</dbReference>
<dbReference type="PRINTS" id="PR01162">
    <property type="entry name" value="ALPHATUBULIN"/>
</dbReference>
<dbReference type="PRINTS" id="PR01161">
    <property type="entry name" value="TUBULIN"/>
</dbReference>
<dbReference type="SMART" id="SM00864">
    <property type="entry name" value="Tubulin"/>
    <property type="match status" value="1"/>
</dbReference>
<dbReference type="SMART" id="SM00865">
    <property type="entry name" value="Tubulin_C"/>
    <property type="match status" value="1"/>
</dbReference>
<dbReference type="SUPFAM" id="SSF55307">
    <property type="entry name" value="Tubulin C-terminal domain-like"/>
    <property type="match status" value="1"/>
</dbReference>
<dbReference type="SUPFAM" id="SSF52490">
    <property type="entry name" value="Tubulin nucleotide-binding domain-like"/>
    <property type="match status" value="1"/>
</dbReference>
<dbReference type="PROSITE" id="PS00227">
    <property type="entry name" value="TUBULIN"/>
    <property type="match status" value="1"/>
</dbReference>
<protein>
    <recommendedName>
        <fullName>Tubulin alpha-8 chain</fullName>
        <ecNumber evidence="1">3.6.5.-</ecNumber>
    </recommendedName>
</protein>
<comment type="function">
    <text>Tubulin is the major constituent of microtubules, a cylinder consisting of laterally associated linear protofilaments composed of alpha- and beta-tubulin heterodimers. Microtubules grow by the addition of GTP-tubulin dimers to the microtubule end, where a stabilizing cap forms. Below the cap, tubulin dimers are in GDP-bound state, owing to GTPase activity of alpha-tubulin.</text>
</comment>
<comment type="catalytic activity">
    <reaction evidence="1">
        <text>GTP + H2O = GDP + phosphate + H(+)</text>
        <dbReference type="Rhea" id="RHEA:19669"/>
        <dbReference type="ChEBI" id="CHEBI:15377"/>
        <dbReference type="ChEBI" id="CHEBI:15378"/>
        <dbReference type="ChEBI" id="CHEBI:37565"/>
        <dbReference type="ChEBI" id="CHEBI:43474"/>
        <dbReference type="ChEBI" id="CHEBI:58189"/>
    </reaction>
    <physiologicalReaction direction="left-to-right" evidence="1">
        <dbReference type="Rhea" id="RHEA:19670"/>
    </physiologicalReaction>
</comment>
<comment type="cofactor">
    <cofactor evidence="1">
        <name>Mg(2+)</name>
        <dbReference type="ChEBI" id="CHEBI:18420"/>
    </cofactor>
</comment>
<comment type="subunit">
    <text>Dimer of alpha and beta chains. A typical microtubule is a hollow water-filled tube with an outer diameter of 25 nm and an inner diameter of 15 nM. Alpha-beta heterodimers associate head-to-tail to form protofilaments running lengthwise along the microtubule wall with the beta-tubulin subunit facing the microtubule plus end conferring a structural polarity. Microtubules usually have 13 protofilaments but different protofilament numbers can be found in some organisms and specialized cells.</text>
</comment>
<comment type="subcellular location">
    <subcellularLocation>
        <location>Cytoplasm</location>
        <location>Cytoskeleton</location>
    </subcellularLocation>
</comment>
<comment type="PTM">
    <text evidence="2">Some glutamate residues at the C-terminus are polyglycylated, resulting in polyglycine chains on the gamma-carboxyl group. Glycylation is mainly limited to tubulin incorporated into axonemes (cilia and flagella) whereas glutamylation is prevalent in neuronal cells, centrioles, axonemes, and the mitotic spindle. Both modifications can coexist on the same protein on adjacent residues, and lowering polyglycylation levels increases polyglutamylation, and reciprocally. The precise function of polyglycylation is still unclear.</text>
</comment>
<comment type="PTM">
    <text evidence="2 3">Some glutamate residues at the C-terminus are polyglutamylated, resulting in polyglutamate chains on the gamma-carboxyl group (By similarity). Polyglutamylation plays a key role in microtubule severing by spastin (SPAST). SPAST preferentially recognizes and acts on microtubules decorated with short polyglutamate tails: severing activity by SPAST increases as the number of glutamates per tubulin rises from one to eight, but decreases beyond this glutamylation threshold (By similarity).</text>
</comment>
<comment type="miscellaneous">
    <text>There are at least seven alpha tubulin genes (alpha-1 to alpha-6, and alpha-8), and a pseudogene (alpha-7) in chicken.</text>
</comment>
<comment type="similarity">
    <text evidence="4">Belongs to the tubulin family.</text>
</comment>
<sequence length="324" mass="36161">VDQCTGLQGFLIFHSFGGGTGSGFTSLLMERLSVDYGKKSKLEFAIYPAPQVSTAVVEPYNSILTTHTTLEQSDCAFMVDNEAIYDICRRNLDIERPTYTNLNRLIGQIVSSITASLRFDGALNVDLTEFQTNLVPYPRIHFPLVTYSPIISAEKAYHEQLSVSEITNACFEPSNQMVKCDPRHGKYMACCMLYRGDVVPKDVNAAIAAIKTKRTIQFVDWCPTGFKVGINYQPPTVVPGGDLAKVQRAVCMLSNTTAIAEAWARLDHKFDLMYAKRAFVHWYVGEGMEEGEFSEAREDLAALEKDYEEVGTDSMDGEDEGEEY</sequence>